<gene>
    <name evidence="1" type="primary">era</name>
    <name type="ordered locus">VP2571</name>
</gene>
<name>ERA_VIBPA</name>
<feature type="chain" id="PRO_0000180071" description="GTPase Era">
    <location>
        <begin position="1"/>
        <end position="320"/>
    </location>
</feature>
<feature type="domain" description="Era-type G" evidence="2">
    <location>
        <begin position="25"/>
        <end position="193"/>
    </location>
</feature>
<feature type="domain" description="KH type-2" evidence="1">
    <location>
        <begin position="216"/>
        <end position="302"/>
    </location>
</feature>
<feature type="region of interest" description="G1" evidence="2">
    <location>
        <begin position="33"/>
        <end position="40"/>
    </location>
</feature>
<feature type="region of interest" description="G2" evidence="2">
    <location>
        <begin position="59"/>
        <end position="63"/>
    </location>
</feature>
<feature type="region of interest" description="G3" evidence="2">
    <location>
        <begin position="80"/>
        <end position="83"/>
    </location>
</feature>
<feature type="region of interest" description="G4" evidence="2">
    <location>
        <begin position="142"/>
        <end position="145"/>
    </location>
</feature>
<feature type="region of interest" description="G5" evidence="2">
    <location>
        <begin position="172"/>
        <end position="174"/>
    </location>
</feature>
<feature type="binding site" evidence="1">
    <location>
        <begin position="33"/>
        <end position="40"/>
    </location>
    <ligand>
        <name>GTP</name>
        <dbReference type="ChEBI" id="CHEBI:37565"/>
    </ligand>
</feature>
<feature type="binding site" evidence="1">
    <location>
        <begin position="80"/>
        <end position="84"/>
    </location>
    <ligand>
        <name>GTP</name>
        <dbReference type="ChEBI" id="CHEBI:37565"/>
    </ligand>
</feature>
<feature type="binding site" evidence="1">
    <location>
        <begin position="142"/>
        <end position="145"/>
    </location>
    <ligand>
        <name>GTP</name>
        <dbReference type="ChEBI" id="CHEBI:37565"/>
    </ligand>
</feature>
<accession>Q87LP0</accession>
<comment type="function">
    <text evidence="1">An essential GTPase that binds both GDP and GTP, with rapid nucleotide exchange. Plays a role in 16S rRNA processing and 30S ribosomal subunit biogenesis and possibly also in cell cycle regulation and energy metabolism.</text>
</comment>
<comment type="subunit">
    <text evidence="1">Monomer.</text>
</comment>
<comment type="subcellular location">
    <subcellularLocation>
        <location>Cytoplasm</location>
    </subcellularLocation>
    <subcellularLocation>
        <location evidence="1">Cell inner membrane</location>
        <topology evidence="1">Peripheral membrane protein</topology>
    </subcellularLocation>
</comment>
<comment type="similarity">
    <text evidence="1 2">Belongs to the TRAFAC class TrmE-Era-EngA-EngB-Septin-like GTPase superfamily. Era GTPase family.</text>
</comment>
<reference key="1">
    <citation type="journal article" date="2003" name="Lancet">
        <title>Genome sequence of Vibrio parahaemolyticus: a pathogenic mechanism distinct from that of V. cholerae.</title>
        <authorList>
            <person name="Makino K."/>
            <person name="Oshima K."/>
            <person name="Kurokawa K."/>
            <person name="Yokoyama K."/>
            <person name="Uda T."/>
            <person name="Tagomori K."/>
            <person name="Iijima Y."/>
            <person name="Najima M."/>
            <person name="Nakano M."/>
            <person name="Yamashita A."/>
            <person name="Kubota Y."/>
            <person name="Kimura S."/>
            <person name="Yasunaga T."/>
            <person name="Honda T."/>
            <person name="Shinagawa H."/>
            <person name="Hattori M."/>
            <person name="Iida T."/>
        </authorList>
    </citation>
    <scope>NUCLEOTIDE SEQUENCE [LARGE SCALE GENOMIC DNA]</scope>
    <source>
        <strain>RIMD 2210633</strain>
    </source>
</reference>
<proteinExistence type="inferred from homology"/>
<organism>
    <name type="scientific">Vibrio parahaemolyticus serotype O3:K6 (strain RIMD 2210633)</name>
    <dbReference type="NCBI Taxonomy" id="223926"/>
    <lineage>
        <taxon>Bacteria</taxon>
        <taxon>Pseudomonadati</taxon>
        <taxon>Pseudomonadota</taxon>
        <taxon>Gammaproteobacteria</taxon>
        <taxon>Vibrionales</taxon>
        <taxon>Vibrionaceae</taxon>
        <taxon>Vibrio</taxon>
    </lineage>
</organism>
<sequence>MADNEFDIDAFFASHGEVSSPENQHCGFIAIVGRPNVGKSTLLNKILGQKISITSRKPQTTRHRIMGVDTDGDYQAIYVDTPGLHIEEKRAINRLMNRAANSSLSDVNLVFFLVDGTHWTKDDEMVLTKLQKSNFPVVLCVNKVDNVQDRNEVMLHMAEMSKKMDFVDVVPISAKQGKNIDVLRKHVRNHLPKATHHFPEEYVTDRSQRFMASEIVREKLMRFTGDELPYSVTVEIERFDYNPETDGFHINALILVERNGQKKMVIGKGGEKIKTIGREARLDMEELFGRKVYLETWVKVKSGWADDERALRSLGYIDDL</sequence>
<dbReference type="EMBL" id="BA000031">
    <property type="protein sequence ID" value="BAC60834.1"/>
    <property type="molecule type" value="Genomic_DNA"/>
</dbReference>
<dbReference type="RefSeq" id="NP_798950.1">
    <property type="nucleotide sequence ID" value="NC_004603.1"/>
</dbReference>
<dbReference type="RefSeq" id="WP_005460684.1">
    <property type="nucleotide sequence ID" value="NC_004603.1"/>
</dbReference>
<dbReference type="SMR" id="Q87LP0"/>
<dbReference type="GeneID" id="1190095"/>
<dbReference type="KEGG" id="vpa:VP2571"/>
<dbReference type="PATRIC" id="fig|223926.6.peg.2469"/>
<dbReference type="eggNOG" id="COG1159">
    <property type="taxonomic scope" value="Bacteria"/>
</dbReference>
<dbReference type="HOGENOM" id="CLU_038009_1_2_6"/>
<dbReference type="Proteomes" id="UP000002493">
    <property type="component" value="Chromosome 1"/>
</dbReference>
<dbReference type="GO" id="GO:0005829">
    <property type="term" value="C:cytosol"/>
    <property type="evidence" value="ECO:0007669"/>
    <property type="project" value="TreeGrafter"/>
</dbReference>
<dbReference type="GO" id="GO:0005886">
    <property type="term" value="C:plasma membrane"/>
    <property type="evidence" value="ECO:0007669"/>
    <property type="project" value="UniProtKB-SubCell"/>
</dbReference>
<dbReference type="GO" id="GO:0005525">
    <property type="term" value="F:GTP binding"/>
    <property type="evidence" value="ECO:0007669"/>
    <property type="project" value="UniProtKB-UniRule"/>
</dbReference>
<dbReference type="GO" id="GO:0003924">
    <property type="term" value="F:GTPase activity"/>
    <property type="evidence" value="ECO:0007669"/>
    <property type="project" value="UniProtKB-UniRule"/>
</dbReference>
<dbReference type="GO" id="GO:0043024">
    <property type="term" value="F:ribosomal small subunit binding"/>
    <property type="evidence" value="ECO:0007669"/>
    <property type="project" value="TreeGrafter"/>
</dbReference>
<dbReference type="GO" id="GO:0070181">
    <property type="term" value="F:small ribosomal subunit rRNA binding"/>
    <property type="evidence" value="ECO:0007669"/>
    <property type="project" value="UniProtKB-UniRule"/>
</dbReference>
<dbReference type="GO" id="GO:0000028">
    <property type="term" value="P:ribosomal small subunit assembly"/>
    <property type="evidence" value="ECO:0007669"/>
    <property type="project" value="TreeGrafter"/>
</dbReference>
<dbReference type="CDD" id="cd04163">
    <property type="entry name" value="Era"/>
    <property type="match status" value="1"/>
</dbReference>
<dbReference type="CDD" id="cd22534">
    <property type="entry name" value="KH-II_Era"/>
    <property type="match status" value="1"/>
</dbReference>
<dbReference type="FunFam" id="3.30.300.20:FF:000003">
    <property type="entry name" value="GTPase Era"/>
    <property type="match status" value="1"/>
</dbReference>
<dbReference type="FunFam" id="3.40.50.300:FF:000094">
    <property type="entry name" value="GTPase Era"/>
    <property type="match status" value="1"/>
</dbReference>
<dbReference type="Gene3D" id="3.30.300.20">
    <property type="match status" value="1"/>
</dbReference>
<dbReference type="Gene3D" id="3.40.50.300">
    <property type="entry name" value="P-loop containing nucleotide triphosphate hydrolases"/>
    <property type="match status" value="1"/>
</dbReference>
<dbReference type="HAMAP" id="MF_00367">
    <property type="entry name" value="GTPase_Era"/>
    <property type="match status" value="1"/>
</dbReference>
<dbReference type="InterPro" id="IPR030388">
    <property type="entry name" value="G_ERA_dom"/>
</dbReference>
<dbReference type="InterPro" id="IPR006073">
    <property type="entry name" value="GTP-bd"/>
</dbReference>
<dbReference type="InterPro" id="IPR005662">
    <property type="entry name" value="GTPase_Era-like"/>
</dbReference>
<dbReference type="InterPro" id="IPR015946">
    <property type="entry name" value="KH_dom-like_a/b"/>
</dbReference>
<dbReference type="InterPro" id="IPR004044">
    <property type="entry name" value="KH_dom_type_2"/>
</dbReference>
<dbReference type="InterPro" id="IPR009019">
    <property type="entry name" value="KH_sf_prok-type"/>
</dbReference>
<dbReference type="InterPro" id="IPR027417">
    <property type="entry name" value="P-loop_NTPase"/>
</dbReference>
<dbReference type="InterPro" id="IPR005225">
    <property type="entry name" value="Small_GTP-bd"/>
</dbReference>
<dbReference type="NCBIfam" id="TIGR00436">
    <property type="entry name" value="era"/>
    <property type="match status" value="1"/>
</dbReference>
<dbReference type="NCBIfam" id="NF000908">
    <property type="entry name" value="PRK00089.1"/>
    <property type="match status" value="1"/>
</dbReference>
<dbReference type="NCBIfam" id="TIGR00231">
    <property type="entry name" value="small_GTP"/>
    <property type="match status" value="1"/>
</dbReference>
<dbReference type="PANTHER" id="PTHR42698">
    <property type="entry name" value="GTPASE ERA"/>
    <property type="match status" value="1"/>
</dbReference>
<dbReference type="PANTHER" id="PTHR42698:SF1">
    <property type="entry name" value="GTPASE ERA, MITOCHONDRIAL"/>
    <property type="match status" value="1"/>
</dbReference>
<dbReference type="Pfam" id="PF07650">
    <property type="entry name" value="KH_2"/>
    <property type="match status" value="1"/>
</dbReference>
<dbReference type="Pfam" id="PF01926">
    <property type="entry name" value="MMR_HSR1"/>
    <property type="match status" value="1"/>
</dbReference>
<dbReference type="SUPFAM" id="SSF52540">
    <property type="entry name" value="P-loop containing nucleoside triphosphate hydrolases"/>
    <property type="match status" value="1"/>
</dbReference>
<dbReference type="SUPFAM" id="SSF54814">
    <property type="entry name" value="Prokaryotic type KH domain (KH-domain type II)"/>
    <property type="match status" value="1"/>
</dbReference>
<dbReference type="PROSITE" id="PS51713">
    <property type="entry name" value="G_ERA"/>
    <property type="match status" value="1"/>
</dbReference>
<dbReference type="PROSITE" id="PS50823">
    <property type="entry name" value="KH_TYPE_2"/>
    <property type="match status" value="1"/>
</dbReference>
<protein>
    <recommendedName>
        <fullName evidence="1">GTPase Era</fullName>
    </recommendedName>
</protein>
<keyword id="KW-0997">Cell inner membrane</keyword>
<keyword id="KW-1003">Cell membrane</keyword>
<keyword id="KW-0963">Cytoplasm</keyword>
<keyword id="KW-0342">GTP-binding</keyword>
<keyword id="KW-0472">Membrane</keyword>
<keyword id="KW-0547">Nucleotide-binding</keyword>
<keyword id="KW-0690">Ribosome biogenesis</keyword>
<keyword id="KW-0694">RNA-binding</keyword>
<keyword id="KW-0699">rRNA-binding</keyword>
<evidence type="ECO:0000255" key="1">
    <source>
        <dbReference type="HAMAP-Rule" id="MF_00367"/>
    </source>
</evidence>
<evidence type="ECO:0000255" key="2">
    <source>
        <dbReference type="PROSITE-ProRule" id="PRU01050"/>
    </source>
</evidence>